<reference evidence="7" key="1">
    <citation type="journal article" date="2005" name="Science">
        <title>The transcriptional landscape of the mammalian genome.</title>
        <authorList>
            <person name="Carninci P."/>
            <person name="Kasukawa T."/>
            <person name="Katayama S."/>
            <person name="Gough J."/>
            <person name="Frith M.C."/>
            <person name="Maeda N."/>
            <person name="Oyama R."/>
            <person name="Ravasi T."/>
            <person name="Lenhard B."/>
            <person name="Wells C."/>
            <person name="Kodzius R."/>
            <person name="Shimokawa K."/>
            <person name="Bajic V.B."/>
            <person name="Brenner S.E."/>
            <person name="Batalov S."/>
            <person name="Forrest A.R."/>
            <person name="Zavolan M."/>
            <person name="Davis M.J."/>
            <person name="Wilming L.G."/>
            <person name="Aidinis V."/>
            <person name="Allen J.E."/>
            <person name="Ambesi-Impiombato A."/>
            <person name="Apweiler R."/>
            <person name="Aturaliya R.N."/>
            <person name="Bailey T.L."/>
            <person name="Bansal M."/>
            <person name="Baxter L."/>
            <person name="Beisel K.W."/>
            <person name="Bersano T."/>
            <person name="Bono H."/>
            <person name="Chalk A.M."/>
            <person name="Chiu K.P."/>
            <person name="Choudhary V."/>
            <person name="Christoffels A."/>
            <person name="Clutterbuck D.R."/>
            <person name="Crowe M.L."/>
            <person name="Dalla E."/>
            <person name="Dalrymple B.P."/>
            <person name="de Bono B."/>
            <person name="Della Gatta G."/>
            <person name="di Bernardo D."/>
            <person name="Down T."/>
            <person name="Engstrom P."/>
            <person name="Fagiolini M."/>
            <person name="Faulkner G."/>
            <person name="Fletcher C.F."/>
            <person name="Fukushima T."/>
            <person name="Furuno M."/>
            <person name="Futaki S."/>
            <person name="Gariboldi M."/>
            <person name="Georgii-Hemming P."/>
            <person name="Gingeras T.R."/>
            <person name="Gojobori T."/>
            <person name="Green R.E."/>
            <person name="Gustincich S."/>
            <person name="Harbers M."/>
            <person name="Hayashi Y."/>
            <person name="Hensch T.K."/>
            <person name="Hirokawa N."/>
            <person name="Hill D."/>
            <person name="Huminiecki L."/>
            <person name="Iacono M."/>
            <person name="Ikeo K."/>
            <person name="Iwama A."/>
            <person name="Ishikawa T."/>
            <person name="Jakt M."/>
            <person name="Kanapin A."/>
            <person name="Katoh M."/>
            <person name="Kawasawa Y."/>
            <person name="Kelso J."/>
            <person name="Kitamura H."/>
            <person name="Kitano H."/>
            <person name="Kollias G."/>
            <person name="Krishnan S.P."/>
            <person name="Kruger A."/>
            <person name="Kummerfeld S.K."/>
            <person name="Kurochkin I.V."/>
            <person name="Lareau L.F."/>
            <person name="Lazarevic D."/>
            <person name="Lipovich L."/>
            <person name="Liu J."/>
            <person name="Liuni S."/>
            <person name="McWilliam S."/>
            <person name="Madan Babu M."/>
            <person name="Madera M."/>
            <person name="Marchionni L."/>
            <person name="Matsuda H."/>
            <person name="Matsuzawa S."/>
            <person name="Miki H."/>
            <person name="Mignone F."/>
            <person name="Miyake S."/>
            <person name="Morris K."/>
            <person name="Mottagui-Tabar S."/>
            <person name="Mulder N."/>
            <person name="Nakano N."/>
            <person name="Nakauchi H."/>
            <person name="Ng P."/>
            <person name="Nilsson R."/>
            <person name="Nishiguchi S."/>
            <person name="Nishikawa S."/>
            <person name="Nori F."/>
            <person name="Ohara O."/>
            <person name="Okazaki Y."/>
            <person name="Orlando V."/>
            <person name="Pang K.C."/>
            <person name="Pavan W.J."/>
            <person name="Pavesi G."/>
            <person name="Pesole G."/>
            <person name="Petrovsky N."/>
            <person name="Piazza S."/>
            <person name="Reed J."/>
            <person name="Reid J.F."/>
            <person name="Ring B.Z."/>
            <person name="Ringwald M."/>
            <person name="Rost B."/>
            <person name="Ruan Y."/>
            <person name="Salzberg S.L."/>
            <person name="Sandelin A."/>
            <person name="Schneider C."/>
            <person name="Schoenbach C."/>
            <person name="Sekiguchi K."/>
            <person name="Semple C.A."/>
            <person name="Seno S."/>
            <person name="Sessa L."/>
            <person name="Sheng Y."/>
            <person name="Shibata Y."/>
            <person name="Shimada H."/>
            <person name="Shimada K."/>
            <person name="Silva D."/>
            <person name="Sinclair B."/>
            <person name="Sperling S."/>
            <person name="Stupka E."/>
            <person name="Sugiura K."/>
            <person name="Sultana R."/>
            <person name="Takenaka Y."/>
            <person name="Taki K."/>
            <person name="Tammoja K."/>
            <person name="Tan S.L."/>
            <person name="Tang S."/>
            <person name="Taylor M.S."/>
            <person name="Tegner J."/>
            <person name="Teichmann S.A."/>
            <person name="Ueda H.R."/>
            <person name="van Nimwegen E."/>
            <person name="Verardo R."/>
            <person name="Wei C.L."/>
            <person name="Yagi K."/>
            <person name="Yamanishi H."/>
            <person name="Zabarovsky E."/>
            <person name="Zhu S."/>
            <person name="Zimmer A."/>
            <person name="Hide W."/>
            <person name="Bult C."/>
            <person name="Grimmond S.M."/>
            <person name="Teasdale R.D."/>
            <person name="Liu E.T."/>
            <person name="Brusic V."/>
            <person name="Quackenbush J."/>
            <person name="Wahlestedt C."/>
            <person name="Mattick J.S."/>
            <person name="Hume D.A."/>
            <person name="Kai C."/>
            <person name="Sasaki D."/>
            <person name="Tomaru Y."/>
            <person name="Fukuda S."/>
            <person name="Kanamori-Katayama M."/>
            <person name="Suzuki M."/>
            <person name="Aoki J."/>
            <person name="Arakawa T."/>
            <person name="Iida J."/>
            <person name="Imamura K."/>
            <person name="Itoh M."/>
            <person name="Kato T."/>
            <person name="Kawaji H."/>
            <person name="Kawagashira N."/>
            <person name="Kawashima T."/>
            <person name="Kojima M."/>
            <person name="Kondo S."/>
            <person name="Konno H."/>
            <person name="Nakano K."/>
            <person name="Ninomiya N."/>
            <person name="Nishio T."/>
            <person name="Okada M."/>
            <person name="Plessy C."/>
            <person name="Shibata K."/>
            <person name="Shiraki T."/>
            <person name="Suzuki S."/>
            <person name="Tagami M."/>
            <person name="Waki K."/>
            <person name="Watahiki A."/>
            <person name="Okamura-Oho Y."/>
            <person name="Suzuki H."/>
            <person name="Kawai J."/>
            <person name="Hayashizaki Y."/>
        </authorList>
    </citation>
    <scope>NUCLEOTIDE SEQUENCE [LARGE SCALE MRNA]</scope>
    <source>
        <strain evidence="7">C57BL/6J</strain>
        <tissue evidence="7">Testis</tissue>
    </source>
</reference>
<reference evidence="6" key="2">
    <citation type="journal article" date="2004" name="Genome Res.">
        <title>The status, quality, and expansion of the NIH full-length cDNA project: the Mammalian Gene Collection (MGC).</title>
        <authorList>
            <consortium name="The MGC Project Team"/>
        </authorList>
    </citation>
    <scope>NUCLEOTIDE SEQUENCE [LARGE SCALE MRNA]</scope>
    <source>
        <tissue evidence="6">Testis</tissue>
    </source>
</reference>
<reference key="3">
    <citation type="journal article" date="2005" name="Biochem. Biophys. Res. Commun.">
        <title>A novel EID family member, EID-3, inhibits differentiation and forms a homodimer or heterodimer with EID-2.</title>
        <authorList>
            <person name="Sasajima Y."/>
            <person name="Tanaka H."/>
            <person name="Miyake S."/>
            <person name="Yuasa Y."/>
        </authorList>
    </citation>
    <scope>SUBUNIT</scope>
</reference>
<reference key="4">
    <citation type="journal article" date="2011" name="PLoS ONE">
        <title>Interactions between the Nse3 and Nse4 components of the SMC5-6 complex identify evolutionarily conserved interactions between MAGE and EID Families.</title>
        <authorList>
            <person name="Hudson J.J."/>
            <person name="Bednarova K."/>
            <person name="Kozakova L."/>
            <person name="Liao C."/>
            <person name="Guerineau M."/>
            <person name="Colnaghi R."/>
            <person name="Vidot S."/>
            <person name="Marek J."/>
            <person name="Bathula S.R."/>
            <person name="Lehmann A.R."/>
            <person name="Palecek J."/>
        </authorList>
    </citation>
    <scope>INTERACTION WITH NSMCE2 AND SMC6</scope>
    <scope>IDENTIFICATION IN THE SMC5-SMC6 COMPLEX</scope>
</reference>
<sequence>MSKEKCSLTGGKEKRGELVRSLAWQHLVKQEEEEAVKKEEKEEGEDEEEEGSDSSSDDPNPEPPCMHPDLLELVVDREKCRKIRRQYRQLIYTVQQNREDIVNTASDTLSEALEEANVLFDGVSRTREAALDAQFLVLASDLGKEKAKQLNTDMNFFNPIAFCDLLLLFVGFNWVEEECKEFSDCDDSIVLSFWGMLHEEATSWMLQAETFHFIFGSFKAERSARKPRLGCHKRACKMEGSGDMPTKLRRLDVHANQETTEKEVERILGLLQTYFQKYPDTPVSYFEFVIDPNSFSRTVENIFYVSFIIRDGFARIRLDQDRLPILEPTNVSQVDDESDSYSYCRKQGVISLSLQDWKNIVSTFEISEAMIKNSY</sequence>
<feature type="chain" id="PRO_0000315907" description="EP300-interacting inhibitor of differentiation 3">
    <location>
        <begin position="1"/>
        <end position="375"/>
    </location>
</feature>
<feature type="region of interest" description="Disordered" evidence="4">
    <location>
        <begin position="30"/>
        <end position="68"/>
    </location>
</feature>
<feature type="coiled-coil region" evidence="3">
    <location>
        <begin position="23"/>
        <end position="51"/>
    </location>
</feature>
<feature type="compositionally biased region" description="Acidic residues" evidence="4">
    <location>
        <begin position="42"/>
        <end position="60"/>
    </location>
</feature>
<feature type="sequence conflict" description="In Ref. 1; BAC25142." evidence="5" ref="1">
    <original>M</original>
    <variation>L</variation>
    <location>
        <position position="1"/>
    </location>
</feature>
<feature type="sequence conflict" description="In Ref. 1; BAC25142." evidence="5" ref="1">
    <original>D</original>
    <variation>N</variation>
    <location>
        <position position="46"/>
    </location>
</feature>
<feature type="sequence conflict" description="In Ref. 1; BAC25142." evidence="5" ref="1">
    <original>D</original>
    <variation>E</variation>
    <location>
        <position position="53"/>
    </location>
</feature>
<feature type="sequence conflict" description="In Ref. 1; BAC25142." evidence="5" ref="1">
    <original>S</original>
    <variation>A</variation>
    <location>
        <position position="56"/>
    </location>
</feature>
<feature type="sequence conflict" description="In Ref. 1; BAE36311/BAE36286." evidence="5" ref="1">
    <original>V</original>
    <variation>L</variation>
    <location>
        <position position="102"/>
    </location>
</feature>
<feature type="sequence conflict" description="In Ref. 1; BAC25142." evidence="5" ref="1">
    <original>N</original>
    <variation>K</variation>
    <location>
        <position position="301"/>
    </location>
</feature>
<evidence type="ECO:0000250" key="1"/>
<evidence type="ECO:0000250" key="2">
    <source>
        <dbReference type="UniProtKB" id="Q8N140"/>
    </source>
</evidence>
<evidence type="ECO:0000255" key="3"/>
<evidence type="ECO:0000256" key="4">
    <source>
        <dbReference type="SAM" id="MobiDB-lite"/>
    </source>
</evidence>
<evidence type="ECO:0000305" key="5"/>
<evidence type="ECO:0000312" key="6">
    <source>
        <dbReference type="EMBL" id="AAH99545.1"/>
    </source>
</evidence>
<evidence type="ECO:0000312" key="7">
    <source>
        <dbReference type="EMBL" id="BAE21329.1"/>
    </source>
</evidence>
<evidence type="ECO:0000312" key="8">
    <source>
        <dbReference type="MGI" id="MGI:1913591"/>
    </source>
</evidence>
<proteinExistence type="evidence at protein level"/>
<accession>Q3V124</accession>
<accession>Q3TTL4</accession>
<accession>Q4KL03</accession>
<accession>Q8CF34</accession>
<accession>Q9CVN8</accession>
<organism>
    <name type="scientific">Mus musculus</name>
    <name type="common">Mouse</name>
    <dbReference type="NCBI Taxonomy" id="10090"/>
    <lineage>
        <taxon>Eukaryota</taxon>
        <taxon>Metazoa</taxon>
        <taxon>Chordata</taxon>
        <taxon>Craniata</taxon>
        <taxon>Vertebrata</taxon>
        <taxon>Euteleostomi</taxon>
        <taxon>Mammalia</taxon>
        <taxon>Eutheria</taxon>
        <taxon>Euarchontoglires</taxon>
        <taxon>Glires</taxon>
        <taxon>Rodentia</taxon>
        <taxon>Myomorpha</taxon>
        <taxon>Muroidea</taxon>
        <taxon>Muridae</taxon>
        <taxon>Murinae</taxon>
        <taxon>Mus</taxon>
        <taxon>Mus</taxon>
    </lineage>
</organism>
<protein>
    <recommendedName>
        <fullName>EP300-interacting inhibitor of differentiation 3</fullName>
        <shortName>EID-3</shortName>
    </recommendedName>
    <alternativeName>
        <fullName>EID-1-like inhibitor of differentiation 3</fullName>
    </alternativeName>
    <alternativeName>
        <fullName>Non-structural maintenance of chromosomes element 4 homolog B</fullName>
        <shortName>NS4EB</shortName>
        <shortName>Non-SMC element 4 homolog B</shortName>
    </alternativeName>
</protein>
<gene>
    <name evidence="8" type="primary">Eid3</name>
</gene>
<name>EID3_MOUSE</name>
<keyword id="KW-0158">Chromosome</keyword>
<keyword id="KW-0175">Coiled coil</keyword>
<keyword id="KW-0963">Cytoplasm</keyword>
<keyword id="KW-0227">DNA damage</keyword>
<keyword id="KW-0233">DNA recombination</keyword>
<keyword id="KW-0234">DNA repair</keyword>
<keyword id="KW-0539">Nucleus</keyword>
<keyword id="KW-1185">Reference proteome</keyword>
<keyword id="KW-0678">Repressor</keyword>
<keyword id="KW-0779">Telomere</keyword>
<keyword id="KW-0804">Transcription</keyword>
<keyword id="KW-0805">Transcription regulation</keyword>
<comment type="function">
    <text evidence="1">Tissue-specific component of the SMC5-SMC6 complex, a complex involved in repair of DNA double-strand breaks by homologous recombination. The complex may promote sister chromatid homologous recombination by recruiting the SMC1-SMC3 cohesin complex to double-strand breaks. The complex is required for telomere maintenance via recombination and mediates sumoylation of shelterin complex (telosome) components (By similarity).</text>
</comment>
<comment type="function">
    <text evidence="1">Acts as a repressor of nuclear receptor-dependent transcription possibly by interfering with CREBBP-dependent coactivation. May function as a coinhibitor of other CREBBP/EP300-dependent transcription factors (By similarity).</text>
</comment>
<comment type="subunit">
    <text evidence="1">Component of the SMC5-SMC6 complex which consists at least of SMC5, SMC6, NSMCE2, NSMCE1, NSMCE4A or EID3 and NSMCE3; EID3 seems to be a testis-specific subunit. NSMCE1, NSMCE4A or EID3 and NSMCE3 probably form a subcomplex that bridges the head domains of the SMC5:SMC6 heterodimer. Homodimer, and heterodimer with EID2. Interacts with the C-terminal region of CREBBP (By similarity).</text>
</comment>
<comment type="subcellular location">
    <subcellularLocation>
        <location evidence="2">Nucleus</location>
    </subcellularLocation>
    <subcellularLocation>
        <location evidence="2">Cytoplasm</location>
    </subcellularLocation>
    <subcellularLocation>
        <location evidence="1">Chromosome</location>
        <location evidence="1">Telomere</location>
    </subcellularLocation>
    <text evidence="2">May shuttle between nucleus and cytoplasm.</text>
</comment>
<comment type="similarity">
    <text evidence="3">Belongs to the NSE4 family.</text>
</comment>
<comment type="sequence caution" evidence="5">
    <conflict type="erroneous initiation">
        <sequence resource="EMBL-CDS" id="AAH99545"/>
    </conflict>
</comment>
<comment type="sequence caution" evidence="5">
    <conflict type="erroneous initiation">
        <sequence resource="EMBL-CDS" id="BAC25142"/>
    </conflict>
</comment>
<dbReference type="EMBL" id="AK006438">
    <property type="protein sequence ID" value="BAC25142.1"/>
    <property type="status" value="ALT_INIT"/>
    <property type="molecule type" value="mRNA"/>
</dbReference>
<dbReference type="EMBL" id="AK007194">
    <property type="protein sequence ID" value="BAB24893.3"/>
    <property type="molecule type" value="mRNA"/>
</dbReference>
<dbReference type="EMBL" id="AK132745">
    <property type="protein sequence ID" value="BAE21329.1"/>
    <property type="molecule type" value="mRNA"/>
</dbReference>
<dbReference type="EMBL" id="AK161275">
    <property type="protein sequence ID" value="BAE36286.1"/>
    <property type="molecule type" value="mRNA"/>
</dbReference>
<dbReference type="EMBL" id="AK161307">
    <property type="protein sequence ID" value="BAE36311.1"/>
    <property type="molecule type" value="mRNA"/>
</dbReference>
<dbReference type="EMBL" id="BC099545">
    <property type="protein sequence ID" value="AAH99545.1"/>
    <property type="status" value="ALT_INIT"/>
    <property type="molecule type" value="mRNA"/>
</dbReference>
<dbReference type="CCDS" id="CCDS83739.1"/>
<dbReference type="RefSeq" id="NP_079775.2">
    <property type="nucleotide sequence ID" value="NM_025499.2"/>
</dbReference>
<dbReference type="SMR" id="Q3V124"/>
<dbReference type="BioGRID" id="211398">
    <property type="interactions" value="2"/>
</dbReference>
<dbReference type="FunCoup" id="Q3V124">
    <property type="interactions" value="311"/>
</dbReference>
<dbReference type="IntAct" id="Q3V124">
    <property type="interactions" value="2"/>
</dbReference>
<dbReference type="STRING" id="10090.ENSMUSP00000147261"/>
<dbReference type="iPTMnet" id="Q3V124"/>
<dbReference type="PhosphoSitePlus" id="Q3V124"/>
<dbReference type="jPOST" id="Q3V124"/>
<dbReference type="ProteomicsDB" id="277844"/>
<dbReference type="Antibodypedia" id="54643">
    <property type="antibodies" value="67 antibodies from 16 providers"/>
</dbReference>
<dbReference type="Ensembl" id="ENSMUST00000211623.2">
    <property type="protein sequence ID" value="ENSMUSP00000147261.2"/>
    <property type="gene ID" value="ENSMUSG00000109864.2"/>
</dbReference>
<dbReference type="GeneID" id="66341"/>
<dbReference type="KEGG" id="mmu:66341"/>
<dbReference type="UCSC" id="uc007gkc.1">
    <property type="organism name" value="mouse"/>
</dbReference>
<dbReference type="AGR" id="MGI:1913591"/>
<dbReference type="CTD" id="493861"/>
<dbReference type="MGI" id="MGI:1913591">
    <property type="gene designation" value="Eid3"/>
</dbReference>
<dbReference type="VEuPathDB" id="HostDB:ENSMUSG00000109864"/>
<dbReference type="GeneTree" id="ENSGT00940000165197"/>
<dbReference type="InParanoid" id="Q3V124"/>
<dbReference type="OMA" id="RVCIRKK"/>
<dbReference type="OrthoDB" id="361242at2759"/>
<dbReference type="PhylomeDB" id="Q3V124"/>
<dbReference type="Reactome" id="R-MMU-3108214">
    <property type="pathway name" value="SUMOylation of DNA damage response and repair proteins"/>
</dbReference>
<dbReference type="BioGRID-ORCS" id="66341">
    <property type="hits" value="0 hits in 53 CRISPR screens"/>
</dbReference>
<dbReference type="PRO" id="PR:Q3V124"/>
<dbReference type="Proteomes" id="UP000000589">
    <property type="component" value="Chromosome 10"/>
</dbReference>
<dbReference type="RNAct" id="Q3V124">
    <property type="molecule type" value="protein"/>
</dbReference>
<dbReference type="Bgee" id="ENSMUSG00000109864">
    <property type="expression patterns" value="Expressed in seminiferous tubule of testis and 39 other cell types or tissues"/>
</dbReference>
<dbReference type="GO" id="GO:0000781">
    <property type="term" value="C:chromosome, telomeric region"/>
    <property type="evidence" value="ECO:0007669"/>
    <property type="project" value="UniProtKB-SubCell"/>
</dbReference>
<dbReference type="GO" id="GO:0005737">
    <property type="term" value="C:cytoplasm"/>
    <property type="evidence" value="ECO:0007669"/>
    <property type="project" value="UniProtKB-SubCell"/>
</dbReference>
<dbReference type="GO" id="GO:0005730">
    <property type="term" value="C:nucleolus"/>
    <property type="evidence" value="ECO:0007669"/>
    <property type="project" value="Ensembl"/>
</dbReference>
<dbReference type="GO" id="GO:0005654">
    <property type="term" value="C:nucleoplasm"/>
    <property type="evidence" value="ECO:0007669"/>
    <property type="project" value="Ensembl"/>
</dbReference>
<dbReference type="GO" id="GO:0030915">
    <property type="term" value="C:Smc5-Smc6 complex"/>
    <property type="evidence" value="ECO:0000250"/>
    <property type="project" value="UniProtKB"/>
</dbReference>
<dbReference type="GO" id="GO:0006310">
    <property type="term" value="P:DNA recombination"/>
    <property type="evidence" value="ECO:0007669"/>
    <property type="project" value="UniProtKB-KW"/>
</dbReference>
<dbReference type="GO" id="GO:0006281">
    <property type="term" value="P:DNA repair"/>
    <property type="evidence" value="ECO:0007669"/>
    <property type="project" value="UniProtKB-KW"/>
</dbReference>
<dbReference type="InterPro" id="IPR027786">
    <property type="entry name" value="Nse4/EID"/>
</dbReference>
<dbReference type="InterPro" id="IPR014854">
    <property type="entry name" value="Nse4_C"/>
</dbReference>
<dbReference type="InterPro" id="IPR029225">
    <property type="entry name" value="Nse4_Nse3-bd"/>
</dbReference>
<dbReference type="PANTHER" id="PTHR16140:SF1">
    <property type="entry name" value="EP300-INTERACTING INHIBITOR OF DIFFERENTIATION 3"/>
    <property type="match status" value="1"/>
</dbReference>
<dbReference type="PANTHER" id="PTHR16140">
    <property type="entry name" value="NON-STRUCTURAL MAINTENANCE OF CHROMOSOMES ELEMENT 4"/>
    <property type="match status" value="1"/>
</dbReference>
<dbReference type="Pfam" id="PF15412">
    <property type="entry name" value="Nse4-Nse3_bdg"/>
    <property type="match status" value="1"/>
</dbReference>
<dbReference type="Pfam" id="PF08743">
    <property type="entry name" value="Nse4_C"/>
    <property type="match status" value="1"/>
</dbReference>